<comment type="subcellular location">
    <subcellularLocation>
        <location evidence="4">Secreted</location>
    </subcellularLocation>
</comment>
<comment type="alternative products">
    <event type="alternative splicing"/>
    <isoform>
        <id>Q80XI7-1</id>
        <name>1</name>
        <sequence type="displayed"/>
    </isoform>
    <isoform>
        <id>Q80XI7-2</id>
        <name>2</name>
        <sequence type="described" ref="VSP_016661"/>
    </isoform>
</comment>
<comment type="tissue specificity">
    <text evidence="4">Expressed in lung. Not detected in other tissues tested (at protein level).</text>
</comment>
<comment type="PTM">
    <text evidence="1">N-glycosylated. The N-glycans consist mainly of complex sialylated and fucosylated biantennary structures.</text>
</comment>
<comment type="miscellaneous">
    <molecule>Isoform 2</molecule>
    <text evidence="6">May be due to intron retention.</text>
</comment>
<feature type="signal peptide" evidence="2">
    <location>
        <begin position="1"/>
        <end position="18"/>
    </location>
</feature>
<feature type="chain" id="PRO_0000045171" description="Vomeromodulin">
    <location>
        <begin position="19"/>
        <end position="591"/>
    </location>
</feature>
<feature type="region of interest" description="Disordered" evidence="3">
    <location>
        <begin position="151"/>
        <end position="172"/>
    </location>
</feature>
<feature type="glycosylation site" description="N-linked (GlcNAc...) asparagine" evidence="2">
    <location>
        <position position="421"/>
    </location>
</feature>
<feature type="glycosylation site" description="N-linked (GlcNAc...) asparagine" evidence="2">
    <location>
        <position position="516"/>
    </location>
</feature>
<feature type="splice variant" id="VSP_016661" description="In isoform 2." evidence="5">
    <original>SEHSVVPPEAKEEVEGILSEVGKVAWSNFNETYKKMNIPVGVSSHTLKNSDVKLMKSIDLQAAS</original>
    <variation>YYNRACGTHSQDGIWGWGNISIITGIRN</variation>
    <location>
        <begin position="528"/>
        <end position="591"/>
    </location>
</feature>
<evidence type="ECO:0000250" key="1">
    <source>
        <dbReference type="UniProtKB" id="Q63751"/>
    </source>
</evidence>
<evidence type="ECO:0000255" key="2"/>
<evidence type="ECO:0000256" key="3">
    <source>
        <dbReference type="SAM" id="MobiDB-lite"/>
    </source>
</evidence>
<evidence type="ECO:0000269" key="4">
    <source>
    </source>
</evidence>
<evidence type="ECO:0000303" key="5">
    <source>
    </source>
</evidence>
<evidence type="ECO:0000305" key="6"/>
<evidence type="ECO:0000312" key="7">
    <source>
        <dbReference type="MGI" id="MGI:3767993"/>
    </source>
</evidence>
<protein>
    <recommendedName>
        <fullName evidence="1">Vomeromodulin</fullName>
    </recommendedName>
    <alternativeName>
        <fullName evidence="7">BPI fold-containing family B member 9A</fullName>
    </alternativeName>
</protein>
<keyword id="KW-0025">Alternative splicing</keyword>
<keyword id="KW-0325">Glycoprotein</keyword>
<keyword id="KW-1185">Reference proteome</keyword>
<keyword id="KW-0964">Secreted</keyword>
<keyword id="KW-0732">Signal</keyword>
<keyword id="KW-0813">Transport</keyword>
<organism>
    <name type="scientific">Mus musculus</name>
    <name type="common">Mouse</name>
    <dbReference type="NCBI Taxonomy" id="10090"/>
    <lineage>
        <taxon>Eukaryota</taxon>
        <taxon>Metazoa</taxon>
        <taxon>Chordata</taxon>
        <taxon>Craniata</taxon>
        <taxon>Vertebrata</taxon>
        <taxon>Euteleostomi</taxon>
        <taxon>Mammalia</taxon>
        <taxon>Eutheria</taxon>
        <taxon>Euarchontoglires</taxon>
        <taxon>Glires</taxon>
        <taxon>Rodentia</taxon>
        <taxon>Myomorpha</taxon>
        <taxon>Muroidea</taxon>
        <taxon>Muridae</taxon>
        <taxon>Murinae</taxon>
        <taxon>Mus</taxon>
        <taxon>Mus</taxon>
    </lineage>
</organism>
<sequence length="591" mass="62448">MWVLQALAIMLSIQAGTLDLVETPPVVGNLPVAMPVPLNLPVGGLSPPVLKGPVNHQMLPPKRPVPPPKGGKCAPAARYFLSSDKLHDYLMSTLPPQIEDMVKCDEVNLEGMLADVLNTVESSDLLSLLDGISLLKGGEGGGLGIGGLLGNEGNGDSSKPSSGSKATGGLGQLIPGGIPGTEALGGLLNLGGDKSSGKGLLNGDGLSKIKKPLEDAVENVSGIKDAIQEKVNEVVPDGVKEPLNDVLKMDIKDTLLELKVGQVTLDDMEINMEANGMQVLSMLTATIDGKGVLGPVISLLQFEAKMDVMTTIAVASNNTQCVNLDAQDTHMHVKEMKIQLVETVTGKVPLPVPLPLDQIIPAIVTAKINENLEKSNSCAIVLNDFNNCKNNTGLFSYQVNTARISPKGLVILYCAKANIGNKTVPVPGGRLPPDPKNASIAVTISSTTLKTLVKEVAKNSSVQMDGLEAQITHIAFASQENNTLRVVYKVDITKNGEHFATGETKLFISHGSKISNSTLIPDVKLIRSEHSVVPPEAKEEVEGILSEVGKVAWSNFNETYKKMNIPVGVSSHTLKNSDVKLMKSIDLQAAS</sequence>
<gene>
    <name evidence="7" type="primary">Bpifb9a</name>
</gene>
<accession>Q80XI7</accession>
<accession>A2AJD0</accession>
<accession>Q5XK13</accession>
<accession>Q8CDY1</accession>
<name>VOME_MOUSE</name>
<proteinExistence type="evidence at protein level"/>
<reference key="1">
    <citation type="journal article" date="2005" name="Science">
        <title>The transcriptional landscape of the mammalian genome.</title>
        <authorList>
            <person name="Carninci P."/>
            <person name="Kasukawa T."/>
            <person name="Katayama S."/>
            <person name="Gough J."/>
            <person name="Frith M.C."/>
            <person name="Maeda N."/>
            <person name="Oyama R."/>
            <person name="Ravasi T."/>
            <person name="Lenhard B."/>
            <person name="Wells C."/>
            <person name="Kodzius R."/>
            <person name="Shimokawa K."/>
            <person name="Bajic V.B."/>
            <person name="Brenner S.E."/>
            <person name="Batalov S."/>
            <person name="Forrest A.R."/>
            <person name="Zavolan M."/>
            <person name="Davis M.J."/>
            <person name="Wilming L.G."/>
            <person name="Aidinis V."/>
            <person name="Allen J.E."/>
            <person name="Ambesi-Impiombato A."/>
            <person name="Apweiler R."/>
            <person name="Aturaliya R.N."/>
            <person name="Bailey T.L."/>
            <person name="Bansal M."/>
            <person name="Baxter L."/>
            <person name="Beisel K.W."/>
            <person name="Bersano T."/>
            <person name="Bono H."/>
            <person name="Chalk A.M."/>
            <person name="Chiu K.P."/>
            <person name="Choudhary V."/>
            <person name="Christoffels A."/>
            <person name="Clutterbuck D.R."/>
            <person name="Crowe M.L."/>
            <person name="Dalla E."/>
            <person name="Dalrymple B.P."/>
            <person name="de Bono B."/>
            <person name="Della Gatta G."/>
            <person name="di Bernardo D."/>
            <person name="Down T."/>
            <person name="Engstrom P."/>
            <person name="Fagiolini M."/>
            <person name="Faulkner G."/>
            <person name="Fletcher C.F."/>
            <person name="Fukushima T."/>
            <person name="Furuno M."/>
            <person name="Futaki S."/>
            <person name="Gariboldi M."/>
            <person name="Georgii-Hemming P."/>
            <person name="Gingeras T.R."/>
            <person name="Gojobori T."/>
            <person name="Green R.E."/>
            <person name="Gustincich S."/>
            <person name="Harbers M."/>
            <person name="Hayashi Y."/>
            <person name="Hensch T.K."/>
            <person name="Hirokawa N."/>
            <person name="Hill D."/>
            <person name="Huminiecki L."/>
            <person name="Iacono M."/>
            <person name="Ikeo K."/>
            <person name="Iwama A."/>
            <person name="Ishikawa T."/>
            <person name="Jakt M."/>
            <person name="Kanapin A."/>
            <person name="Katoh M."/>
            <person name="Kawasawa Y."/>
            <person name="Kelso J."/>
            <person name="Kitamura H."/>
            <person name="Kitano H."/>
            <person name="Kollias G."/>
            <person name="Krishnan S.P."/>
            <person name="Kruger A."/>
            <person name="Kummerfeld S.K."/>
            <person name="Kurochkin I.V."/>
            <person name="Lareau L.F."/>
            <person name="Lazarevic D."/>
            <person name="Lipovich L."/>
            <person name="Liu J."/>
            <person name="Liuni S."/>
            <person name="McWilliam S."/>
            <person name="Madan Babu M."/>
            <person name="Madera M."/>
            <person name="Marchionni L."/>
            <person name="Matsuda H."/>
            <person name="Matsuzawa S."/>
            <person name="Miki H."/>
            <person name="Mignone F."/>
            <person name="Miyake S."/>
            <person name="Morris K."/>
            <person name="Mottagui-Tabar S."/>
            <person name="Mulder N."/>
            <person name="Nakano N."/>
            <person name="Nakauchi H."/>
            <person name="Ng P."/>
            <person name="Nilsson R."/>
            <person name="Nishiguchi S."/>
            <person name="Nishikawa S."/>
            <person name="Nori F."/>
            <person name="Ohara O."/>
            <person name="Okazaki Y."/>
            <person name="Orlando V."/>
            <person name="Pang K.C."/>
            <person name="Pavan W.J."/>
            <person name="Pavesi G."/>
            <person name="Pesole G."/>
            <person name="Petrovsky N."/>
            <person name="Piazza S."/>
            <person name="Reed J."/>
            <person name="Reid J.F."/>
            <person name="Ring B.Z."/>
            <person name="Ringwald M."/>
            <person name="Rost B."/>
            <person name="Ruan Y."/>
            <person name="Salzberg S.L."/>
            <person name="Sandelin A."/>
            <person name="Schneider C."/>
            <person name="Schoenbach C."/>
            <person name="Sekiguchi K."/>
            <person name="Semple C.A."/>
            <person name="Seno S."/>
            <person name="Sessa L."/>
            <person name="Sheng Y."/>
            <person name="Shibata Y."/>
            <person name="Shimada H."/>
            <person name="Shimada K."/>
            <person name="Silva D."/>
            <person name="Sinclair B."/>
            <person name="Sperling S."/>
            <person name="Stupka E."/>
            <person name="Sugiura K."/>
            <person name="Sultana R."/>
            <person name="Takenaka Y."/>
            <person name="Taki K."/>
            <person name="Tammoja K."/>
            <person name="Tan S.L."/>
            <person name="Tang S."/>
            <person name="Taylor M.S."/>
            <person name="Tegner J."/>
            <person name="Teichmann S.A."/>
            <person name="Ueda H.R."/>
            <person name="van Nimwegen E."/>
            <person name="Verardo R."/>
            <person name="Wei C.L."/>
            <person name="Yagi K."/>
            <person name="Yamanishi H."/>
            <person name="Zabarovsky E."/>
            <person name="Zhu S."/>
            <person name="Zimmer A."/>
            <person name="Hide W."/>
            <person name="Bult C."/>
            <person name="Grimmond S.M."/>
            <person name="Teasdale R.D."/>
            <person name="Liu E.T."/>
            <person name="Brusic V."/>
            <person name="Quackenbush J."/>
            <person name="Wahlestedt C."/>
            <person name="Mattick J.S."/>
            <person name="Hume D.A."/>
            <person name="Kai C."/>
            <person name="Sasaki D."/>
            <person name="Tomaru Y."/>
            <person name="Fukuda S."/>
            <person name="Kanamori-Katayama M."/>
            <person name="Suzuki M."/>
            <person name="Aoki J."/>
            <person name="Arakawa T."/>
            <person name="Iida J."/>
            <person name="Imamura K."/>
            <person name="Itoh M."/>
            <person name="Kato T."/>
            <person name="Kawaji H."/>
            <person name="Kawagashira N."/>
            <person name="Kawashima T."/>
            <person name="Kojima M."/>
            <person name="Kondo S."/>
            <person name="Konno H."/>
            <person name="Nakano K."/>
            <person name="Ninomiya N."/>
            <person name="Nishio T."/>
            <person name="Okada M."/>
            <person name="Plessy C."/>
            <person name="Shibata K."/>
            <person name="Shiraki T."/>
            <person name="Suzuki S."/>
            <person name="Tagami M."/>
            <person name="Waki K."/>
            <person name="Watahiki A."/>
            <person name="Okamura-Oho Y."/>
            <person name="Suzuki H."/>
            <person name="Kawai J."/>
            <person name="Hayashizaki Y."/>
        </authorList>
    </citation>
    <scope>NUCLEOTIDE SEQUENCE [LARGE SCALE MRNA] (ISOFORM 2)</scope>
    <source>
        <strain>C57BL/6J</strain>
        <tissue>Head</tissue>
    </source>
</reference>
<reference key="2">
    <citation type="journal article" date="2009" name="PLoS Biol.">
        <title>Lineage-specific biology revealed by a finished genome assembly of the mouse.</title>
        <authorList>
            <person name="Church D.M."/>
            <person name="Goodstadt L."/>
            <person name="Hillier L.W."/>
            <person name="Zody M.C."/>
            <person name="Goldstein S."/>
            <person name="She X."/>
            <person name="Bult C.J."/>
            <person name="Agarwala R."/>
            <person name="Cherry J.L."/>
            <person name="DiCuccio M."/>
            <person name="Hlavina W."/>
            <person name="Kapustin Y."/>
            <person name="Meric P."/>
            <person name="Maglott D."/>
            <person name="Birtle Z."/>
            <person name="Marques A.C."/>
            <person name="Graves T."/>
            <person name="Zhou S."/>
            <person name="Teague B."/>
            <person name="Potamousis K."/>
            <person name="Churas C."/>
            <person name="Place M."/>
            <person name="Herschleb J."/>
            <person name="Runnheim R."/>
            <person name="Forrest D."/>
            <person name="Amos-Landgraf J."/>
            <person name="Schwartz D.C."/>
            <person name="Cheng Z."/>
            <person name="Lindblad-Toh K."/>
            <person name="Eichler E.E."/>
            <person name="Ponting C.P."/>
        </authorList>
    </citation>
    <scope>NUCLEOTIDE SEQUENCE [LARGE SCALE GENOMIC DNA]</scope>
    <source>
        <strain>C57BL/6J</strain>
    </source>
</reference>
<reference key="3">
    <citation type="journal article" date="2004" name="Genome Res.">
        <title>The status, quality, and expansion of the NIH full-length cDNA project: the Mammalian Gene Collection (MGC).</title>
        <authorList>
            <consortium name="The MGC Project Team"/>
        </authorList>
    </citation>
    <scope>NUCLEOTIDE SEQUENCE [LARGE SCALE MRNA] (ISOFORM 1)</scope>
    <source>
        <tissue>Olfactory epithelium</tissue>
    </source>
</reference>
<reference key="4">
    <citation type="journal article" date="2009" name="Sci. Transl. Med.">
        <title>Identification of an autoantigen demonstrates a link between interstitial lung disease and a defect in central tolerance.</title>
        <authorList>
            <person name="Shum A.K."/>
            <person name="DeVoss J."/>
            <person name="Tan C.L."/>
            <person name="Hou Y."/>
            <person name="Johannes K."/>
            <person name="O'Gorman C.S."/>
            <person name="Jones K.D."/>
            <person name="Sochett E.B."/>
            <person name="Fong L."/>
            <person name="Anderson M.S."/>
        </authorList>
    </citation>
    <scope>SUBCELLULAR LOCATION</scope>
    <scope>TISSUE SPECIFICITY</scope>
    <scope>IDENTIFICATION BY MASS SPECTROMETRY</scope>
</reference>
<dbReference type="EMBL" id="AK029377">
    <property type="protein sequence ID" value="BAC26427.1"/>
    <property type="molecule type" value="mRNA"/>
</dbReference>
<dbReference type="EMBL" id="AL732601">
    <property type="status" value="NOT_ANNOTATED_CDS"/>
    <property type="molecule type" value="Genomic_DNA"/>
</dbReference>
<dbReference type="EMBL" id="BC047134">
    <property type="protein sequence ID" value="AAH47134.1"/>
    <property type="molecule type" value="mRNA"/>
</dbReference>
<dbReference type="EMBL" id="BC080814">
    <property type="protein sequence ID" value="AAH80814.1"/>
    <property type="molecule type" value="mRNA"/>
</dbReference>
<dbReference type="CCDS" id="CCDS50761.1">
    <molecule id="Q80XI7-1"/>
</dbReference>
<dbReference type="RefSeq" id="NP_780376.2">
    <molecule id="Q80XI7-1"/>
    <property type="nucleotide sequence ID" value="NM_175167.3"/>
</dbReference>
<dbReference type="FunCoup" id="Q80XI7">
    <property type="interactions" value="4"/>
</dbReference>
<dbReference type="STRING" id="10090.ENSMUSP00000086314"/>
<dbReference type="GlyCosmos" id="Q80XI7">
    <property type="glycosylation" value="2 sites, No reported glycans"/>
</dbReference>
<dbReference type="GlyGen" id="Q80XI7">
    <property type="glycosylation" value="6 sites, 5 N-linked glycans (5 sites)"/>
</dbReference>
<dbReference type="iPTMnet" id="Q80XI7"/>
<dbReference type="PhosphoSitePlus" id="Q80XI7"/>
<dbReference type="PaxDb" id="10090-ENSMUSP00000086314"/>
<dbReference type="ProteomicsDB" id="300173">
    <molecule id="Q80XI7-1"/>
</dbReference>
<dbReference type="ProteomicsDB" id="300174">
    <molecule id="Q80XI7-2"/>
</dbReference>
<dbReference type="DNASU" id="71425"/>
<dbReference type="Ensembl" id="ENSMUST00000088924.7">
    <molecule id="Q80XI7-1"/>
    <property type="protein sequence ID" value="ENSMUSP00000086314.6"/>
    <property type="gene ID" value="ENSMUSG00000067998.12"/>
</dbReference>
<dbReference type="GeneID" id="71425"/>
<dbReference type="KEGG" id="mmu:71425"/>
<dbReference type="UCSC" id="uc008niz.1">
    <molecule id="Q80XI7-1"/>
    <property type="organism name" value="mouse"/>
</dbReference>
<dbReference type="AGR" id="MGI:3767993"/>
<dbReference type="CTD" id="71425"/>
<dbReference type="MGI" id="MGI:3767993">
    <property type="gene designation" value="Bpifb9a"/>
</dbReference>
<dbReference type="VEuPathDB" id="HostDB:ENSMUSG00000067998"/>
<dbReference type="eggNOG" id="ENOG502TKQD">
    <property type="taxonomic scope" value="Eukaryota"/>
</dbReference>
<dbReference type="GeneTree" id="ENSGT00940000164301"/>
<dbReference type="HOGENOM" id="CLU_032312_0_0_1"/>
<dbReference type="InParanoid" id="Q80XI7"/>
<dbReference type="OMA" id="DCKNSTG"/>
<dbReference type="OrthoDB" id="9634347at2759"/>
<dbReference type="PhylomeDB" id="Q80XI7"/>
<dbReference type="TreeFam" id="TF338376"/>
<dbReference type="BioGRID-ORCS" id="71425">
    <property type="hits" value="0 hits in 44 CRISPR screens"/>
</dbReference>
<dbReference type="ChiTaRS" id="Bpifb9a">
    <property type="organism name" value="mouse"/>
</dbReference>
<dbReference type="PRO" id="PR:Q80XI7"/>
<dbReference type="Proteomes" id="UP000000589">
    <property type="component" value="Chromosome 2"/>
</dbReference>
<dbReference type="RNAct" id="Q80XI7">
    <property type="molecule type" value="protein"/>
</dbReference>
<dbReference type="Bgee" id="ENSMUSG00000067998">
    <property type="expression patterns" value="Expressed in epiblast cell in embryo and 9 other cell types or tissues"/>
</dbReference>
<dbReference type="GO" id="GO:0005576">
    <property type="term" value="C:extracellular region"/>
    <property type="evidence" value="ECO:0007669"/>
    <property type="project" value="UniProtKB-SubCell"/>
</dbReference>
<dbReference type="GO" id="GO:0008289">
    <property type="term" value="F:lipid binding"/>
    <property type="evidence" value="ECO:0007669"/>
    <property type="project" value="InterPro"/>
</dbReference>
<dbReference type="GO" id="GO:0007608">
    <property type="term" value="P:sensory perception of smell"/>
    <property type="evidence" value="ECO:0007669"/>
    <property type="project" value="InterPro"/>
</dbReference>
<dbReference type="Gene3D" id="3.15.10.10">
    <property type="entry name" value="Bactericidal permeability-increasing protein, domain 1"/>
    <property type="match status" value="1"/>
</dbReference>
<dbReference type="InterPro" id="IPR017942">
    <property type="entry name" value="Lipid-bd_serum_glycop_N"/>
</dbReference>
<dbReference type="InterPro" id="IPR034433">
    <property type="entry name" value="Vomeromodulin"/>
</dbReference>
<dbReference type="PANTHER" id="PTHR40142:SF1">
    <property type="entry name" value="BPI FOLD CONTAINING FAMILY B, MEMBER 9B-RELATED"/>
    <property type="match status" value="1"/>
</dbReference>
<dbReference type="PANTHER" id="PTHR40142">
    <property type="entry name" value="BPI FOLD-CONTAINING FAMILY B, MEMBER 9B-RELATED"/>
    <property type="match status" value="1"/>
</dbReference>
<dbReference type="Pfam" id="PF01273">
    <property type="entry name" value="LBP_BPI_CETP"/>
    <property type="match status" value="1"/>
</dbReference>